<keyword id="KW-0963">Cytoplasm</keyword>
<keyword id="KW-0489">Methyltransferase</keyword>
<keyword id="KW-1185">Reference proteome</keyword>
<keyword id="KW-0698">rRNA processing</keyword>
<keyword id="KW-0949">S-adenosyl-L-methionine</keyword>
<keyword id="KW-0808">Transferase</keyword>
<comment type="function">
    <text evidence="1">Specifically methylates the N7 position of guanine in position 527 of 16S rRNA.</text>
</comment>
<comment type="catalytic activity">
    <reaction evidence="1">
        <text>guanosine(527) in 16S rRNA + S-adenosyl-L-methionine = N(7)-methylguanosine(527) in 16S rRNA + S-adenosyl-L-homocysteine</text>
        <dbReference type="Rhea" id="RHEA:42732"/>
        <dbReference type="Rhea" id="RHEA-COMP:10209"/>
        <dbReference type="Rhea" id="RHEA-COMP:10210"/>
        <dbReference type="ChEBI" id="CHEBI:57856"/>
        <dbReference type="ChEBI" id="CHEBI:59789"/>
        <dbReference type="ChEBI" id="CHEBI:74269"/>
        <dbReference type="ChEBI" id="CHEBI:74480"/>
        <dbReference type="EC" id="2.1.1.170"/>
    </reaction>
</comment>
<comment type="subcellular location">
    <subcellularLocation>
        <location evidence="1">Cytoplasm</location>
    </subcellularLocation>
</comment>
<comment type="similarity">
    <text evidence="1">Belongs to the methyltransferase superfamily. RNA methyltransferase RsmG family.</text>
</comment>
<dbReference type="EC" id="2.1.1.170" evidence="1"/>
<dbReference type="EMBL" id="CP000478">
    <property type="protein sequence ID" value="ABK18279.1"/>
    <property type="molecule type" value="Genomic_DNA"/>
</dbReference>
<dbReference type="RefSeq" id="WP_011699446.1">
    <property type="nucleotide sequence ID" value="NC_008554.1"/>
</dbReference>
<dbReference type="SMR" id="A0LLH7"/>
<dbReference type="FunCoup" id="A0LLH7">
    <property type="interactions" value="480"/>
</dbReference>
<dbReference type="STRING" id="335543.Sfum_2601"/>
<dbReference type="KEGG" id="sfu:Sfum_2601"/>
<dbReference type="eggNOG" id="COG0357">
    <property type="taxonomic scope" value="Bacteria"/>
</dbReference>
<dbReference type="HOGENOM" id="CLU_065341_2_0_7"/>
<dbReference type="InParanoid" id="A0LLH7"/>
<dbReference type="OrthoDB" id="9808773at2"/>
<dbReference type="Proteomes" id="UP000001784">
    <property type="component" value="Chromosome"/>
</dbReference>
<dbReference type="GO" id="GO:0005829">
    <property type="term" value="C:cytosol"/>
    <property type="evidence" value="ECO:0007669"/>
    <property type="project" value="TreeGrafter"/>
</dbReference>
<dbReference type="GO" id="GO:0070043">
    <property type="term" value="F:rRNA (guanine-N7-)-methyltransferase activity"/>
    <property type="evidence" value="ECO:0007669"/>
    <property type="project" value="UniProtKB-UniRule"/>
</dbReference>
<dbReference type="CDD" id="cd02440">
    <property type="entry name" value="AdoMet_MTases"/>
    <property type="match status" value="1"/>
</dbReference>
<dbReference type="Gene3D" id="3.40.50.150">
    <property type="entry name" value="Vaccinia Virus protein VP39"/>
    <property type="match status" value="1"/>
</dbReference>
<dbReference type="HAMAP" id="MF_00074">
    <property type="entry name" value="16SrRNA_methyltr_G"/>
    <property type="match status" value="1"/>
</dbReference>
<dbReference type="InterPro" id="IPR003682">
    <property type="entry name" value="rRNA_ssu_MeTfrase_G"/>
</dbReference>
<dbReference type="InterPro" id="IPR029063">
    <property type="entry name" value="SAM-dependent_MTases_sf"/>
</dbReference>
<dbReference type="NCBIfam" id="TIGR00138">
    <property type="entry name" value="rsmG_gidB"/>
    <property type="match status" value="1"/>
</dbReference>
<dbReference type="PANTHER" id="PTHR31760">
    <property type="entry name" value="S-ADENOSYL-L-METHIONINE-DEPENDENT METHYLTRANSFERASES SUPERFAMILY PROTEIN"/>
    <property type="match status" value="1"/>
</dbReference>
<dbReference type="PANTHER" id="PTHR31760:SF0">
    <property type="entry name" value="S-ADENOSYL-L-METHIONINE-DEPENDENT METHYLTRANSFERASES SUPERFAMILY PROTEIN"/>
    <property type="match status" value="1"/>
</dbReference>
<dbReference type="Pfam" id="PF02527">
    <property type="entry name" value="GidB"/>
    <property type="match status" value="1"/>
</dbReference>
<dbReference type="PIRSF" id="PIRSF003078">
    <property type="entry name" value="GidB"/>
    <property type="match status" value="1"/>
</dbReference>
<dbReference type="SUPFAM" id="SSF53335">
    <property type="entry name" value="S-adenosyl-L-methionine-dependent methyltransferases"/>
    <property type="match status" value="1"/>
</dbReference>
<gene>
    <name evidence="1" type="primary">rsmG1</name>
    <name type="ordered locus">Sfum_2601</name>
</gene>
<reference key="1">
    <citation type="submission" date="2006-10" db="EMBL/GenBank/DDBJ databases">
        <title>Complete sequence of Syntrophobacter fumaroxidans MPOB.</title>
        <authorList>
            <consortium name="US DOE Joint Genome Institute"/>
            <person name="Copeland A."/>
            <person name="Lucas S."/>
            <person name="Lapidus A."/>
            <person name="Barry K."/>
            <person name="Detter J.C."/>
            <person name="Glavina del Rio T."/>
            <person name="Hammon N."/>
            <person name="Israni S."/>
            <person name="Pitluck S."/>
            <person name="Goltsman E.G."/>
            <person name="Martinez M."/>
            <person name="Schmutz J."/>
            <person name="Larimer F."/>
            <person name="Land M."/>
            <person name="Hauser L."/>
            <person name="Kyrpides N."/>
            <person name="Kim E."/>
            <person name="Boone D.R."/>
            <person name="Brockman F."/>
            <person name="Culley D."/>
            <person name="Ferry J."/>
            <person name="Gunsalus R."/>
            <person name="McInerney M.J."/>
            <person name="Morrison M."/>
            <person name="Plugge C."/>
            <person name="Rohlin L."/>
            <person name="Scholten J."/>
            <person name="Sieber J."/>
            <person name="Stams A.J.M."/>
            <person name="Worm P."/>
            <person name="Henstra A.M."/>
            <person name="Richardson P."/>
        </authorList>
    </citation>
    <scope>NUCLEOTIDE SEQUENCE [LARGE SCALE GENOMIC DNA]</scope>
    <source>
        <strain>DSM 10017 / MPOB</strain>
    </source>
</reference>
<proteinExistence type="inferred from homology"/>
<accession>A0LLH7</accession>
<organism>
    <name type="scientific">Syntrophobacter fumaroxidans (strain DSM 10017 / MPOB)</name>
    <dbReference type="NCBI Taxonomy" id="335543"/>
    <lineage>
        <taxon>Bacteria</taxon>
        <taxon>Pseudomonadati</taxon>
        <taxon>Thermodesulfobacteriota</taxon>
        <taxon>Syntrophobacteria</taxon>
        <taxon>Syntrophobacterales</taxon>
        <taxon>Syntrophobacteraceae</taxon>
        <taxon>Syntrophobacter</taxon>
    </lineage>
</organism>
<evidence type="ECO:0000255" key="1">
    <source>
        <dbReference type="HAMAP-Rule" id="MF_00074"/>
    </source>
</evidence>
<protein>
    <recommendedName>
        <fullName evidence="1">Ribosomal RNA small subunit methyltransferase G 1</fullName>
        <ecNumber evidence="1">2.1.1.170</ecNumber>
    </recommendedName>
    <alternativeName>
        <fullName evidence="1">16S rRNA 7-methylguanosine methyltransferase 1</fullName>
        <shortName evidence="1">16S rRNA m7G methyltransferase 1</shortName>
    </alternativeName>
</protein>
<feature type="chain" id="PRO_0000342938" description="Ribosomal RNA small subunit methyltransferase G 1">
    <location>
        <begin position="1"/>
        <end position="220"/>
    </location>
</feature>
<feature type="binding site" evidence="1">
    <location>
        <position position="79"/>
    </location>
    <ligand>
        <name>S-adenosyl-L-methionine</name>
        <dbReference type="ChEBI" id="CHEBI:59789"/>
    </ligand>
</feature>
<feature type="binding site" evidence="1">
    <location>
        <position position="84"/>
    </location>
    <ligand>
        <name>S-adenosyl-L-methionine</name>
        <dbReference type="ChEBI" id="CHEBI:59789"/>
    </ligand>
</feature>
<feature type="binding site" evidence="1">
    <location>
        <position position="150"/>
    </location>
    <ligand>
        <name>S-adenosyl-L-methionine</name>
        <dbReference type="ChEBI" id="CHEBI:59789"/>
    </ligand>
</feature>
<sequence length="220" mass="24850">MRETPSPQTLRAFLNGHGIAVSPQQAEMLFEHVRLMLEWNLRSNLTRITEFDRILTAHLLDSLLPARWLPLTGKTLDVGTGAGFPGVPLKILHPETQMYLLESNRKKVSFLKVLLAGLSLPGIHVLHGRWEEPEGWFTEEDERFTAVIMRAVRVEPGHLTRLAPRVLRPGGVFASWAGSGTETALENRRTHAYPAPAETRSYELPGMSAPRRLYLWRMEG</sequence>
<name>RSMG1_SYNFM</name>